<protein>
    <recommendedName>
        <fullName evidence="1">Multidrug resistance protein MdtH</fullName>
    </recommendedName>
</protein>
<proteinExistence type="inferred from homology"/>
<keyword id="KW-0997">Cell inner membrane</keyword>
<keyword id="KW-1003">Cell membrane</keyword>
<keyword id="KW-0472">Membrane</keyword>
<keyword id="KW-1185">Reference proteome</keyword>
<keyword id="KW-0812">Transmembrane</keyword>
<keyword id="KW-1133">Transmembrane helix</keyword>
<keyword id="KW-0813">Transport</keyword>
<organism>
    <name type="scientific">Proteus mirabilis (strain HI4320)</name>
    <dbReference type="NCBI Taxonomy" id="529507"/>
    <lineage>
        <taxon>Bacteria</taxon>
        <taxon>Pseudomonadati</taxon>
        <taxon>Pseudomonadota</taxon>
        <taxon>Gammaproteobacteria</taxon>
        <taxon>Enterobacterales</taxon>
        <taxon>Morganellaceae</taxon>
        <taxon>Proteus</taxon>
    </lineage>
</organism>
<gene>
    <name evidence="1" type="primary">mdtH</name>
    <name type="ordered locus">PMI1099</name>
</gene>
<comment type="subcellular location">
    <subcellularLocation>
        <location evidence="1">Cell inner membrane</location>
        <topology evidence="1">Multi-pass membrane protein</topology>
    </subcellularLocation>
</comment>
<comment type="similarity">
    <text evidence="1">Belongs to the major facilitator superfamily. DHA1 family. MdtH (TC 2.A.1.2.21) subfamily.</text>
</comment>
<reference key="1">
    <citation type="journal article" date="2008" name="J. Bacteriol.">
        <title>Complete genome sequence of uropathogenic Proteus mirabilis, a master of both adherence and motility.</title>
        <authorList>
            <person name="Pearson M.M."/>
            <person name="Sebaihia M."/>
            <person name="Churcher C."/>
            <person name="Quail M.A."/>
            <person name="Seshasayee A.S."/>
            <person name="Luscombe N.M."/>
            <person name="Abdellah Z."/>
            <person name="Arrosmith C."/>
            <person name="Atkin B."/>
            <person name="Chillingworth T."/>
            <person name="Hauser H."/>
            <person name="Jagels K."/>
            <person name="Moule S."/>
            <person name="Mungall K."/>
            <person name="Norbertczak H."/>
            <person name="Rabbinowitsch E."/>
            <person name="Walker D."/>
            <person name="Whithead S."/>
            <person name="Thomson N.R."/>
            <person name="Rather P.N."/>
            <person name="Parkhill J."/>
            <person name="Mobley H.L.T."/>
        </authorList>
    </citation>
    <scope>NUCLEOTIDE SEQUENCE [LARGE SCALE GENOMIC DNA]</scope>
    <source>
        <strain>HI4320</strain>
    </source>
</reference>
<accession>B4ETN1</accession>
<sequence>MALVTQARTLGKYFLLLDNMLVVLGFFVVFPLISIRFVEQLGWAGVIVGFALGLRQLVQQGLGIFGGAIADRFGAKPMIITGMLLRALGFALMALADKPWILWLSCILSALGGTLFDPPRTALVIKLTRPYERGRFYSLLLMQDSAGAVIGALIGSWLLLYDFHLVCWVGAGIFVLAAIFNAWLLPAYRISTTRTPIKEGLKRVILDKRFVQYVLTLTGYFVLSVQVMLMFPIVVNEIAGTPSAVKWMYAIEALLSLTLLYPIARWSEKHFRLEQRLMAGLFLMSISMFPVGITHSLHAIFLIITLFYLGTITAEPARETLSASLADPRARGSYMGFSRLGLAFGGAIGYTGGGWMYDIGKQLELPELPWFLLGSIGFITLYALHRQFNRKKIETAMLTP</sequence>
<evidence type="ECO:0000255" key="1">
    <source>
        <dbReference type="HAMAP-Rule" id="MF_01529"/>
    </source>
</evidence>
<name>MDTH_PROMH</name>
<feature type="chain" id="PRO_1000200803" description="Multidrug resistance protein MdtH">
    <location>
        <begin position="1"/>
        <end position="400"/>
    </location>
</feature>
<feature type="transmembrane region" description="Helical" evidence="1">
    <location>
        <begin position="13"/>
        <end position="33"/>
    </location>
</feature>
<feature type="transmembrane region" description="Helical" evidence="1">
    <location>
        <begin position="34"/>
        <end position="54"/>
    </location>
</feature>
<feature type="transmembrane region" description="Helical" evidence="1">
    <location>
        <begin position="99"/>
        <end position="116"/>
    </location>
</feature>
<feature type="transmembrane region" description="Helical" evidence="1">
    <location>
        <begin position="139"/>
        <end position="159"/>
    </location>
</feature>
<feature type="transmembrane region" description="Helical" evidence="1">
    <location>
        <begin position="165"/>
        <end position="185"/>
    </location>
</feature>
<feature type="transmembrane region" description="Helical" evidence="1">
    <location>
        <begin position="214"/>
        <end position="234"/>
    </location>
</feature>
<feature type="transmembrane region" description="Helical" evidence="1">
    <location>
        <begin position="244"/>
        <end position="264"/>
    </location>
</feature>
<feature type="transmembrane region" description="Helical" evidence="1">
    <location>
        <begin position="289"/>
        <end position="309"/>
    </location>
</feature>
<feature type="transmembrane region" description="Helical" evidence="1">
    <location>
        <begin position="340"/>
        <end position="360"/>
    </location>
</feature>
<feature type="transmembrane region" description="Helical" evidence="1">
    <location>
        <begin position="365"/>
        <end position="385"/>
    </location>
</feature>
<dbReference type="EMBL" id="AM942759">
    <property type="protein sequence ID" value="CAR42374.1"/>
    <property type="molecule type" value="Genomic_DNA"/>
</dbReference>
<dbReference type="RefSeq" id="WP_012367855.1">
    <property type="nucleotide sequence ID" value="NC_010554.1"/>
</dbReference>
<dbReference type="SMR" id="B4ETN1"/>
<dbReference type="EnsemblBacteria" id="CAR42374">
    <property type="protein sequence ID" value="CAR42374"/>
    <property type="gene ID" value="PMI1099"/>
</dbReference>
<dbReference type="GeneID" id="6801060"/>
<dbReference type="KEGG" id="pmr:PMI1099"/>
<dbReference type="PATRIC" id="fig|529507.6.peg.1063"/>
<dbReference type="eggNOG" id="COG0477">
    <property type="taxonomic scope" value="Bacteria"/>
</dbReference>
<dbReference type="HOGENOM" id="CLU_001265_60_2_6"/>
<dbReference type="Proteomes" id="UP000008319">
    <property type="component" value="Chromosome"/>
</dbReference>
<dbReference type="GO" id="GO:0005886">
    <property type="term" value="C:plasma membrane"/>
    <property type="evidence" value="ECO:0007669"/>
    <property type="project" value="UniProtKB-SubCell"/>
</dbReference>
<dbReference type="GO" id="GO:0022857">
    <property type="term" value="F:transmembrane transporter activity"/>
    <property type="evidence" value="ECO:0007669"/>
    <property type="project" value="UniProtKB-UniRule"/>
</dbReference>
<dbReference type="CDD" id="cd17329">
    <property type="entry name" value="MFS_MdtH_MDR_like"/>
    <property type="match status" value="1"/>
</dbReference>
<dbReference type="Gene3D" id="1.20.1250.20">
    <property type="entry name" value="MFS general substrate transporter like domains"/>
    <property type="match status" value="1"/>
</dbReference>
<dbReference type="HAMAP" id="MF_01529">
    <property type="entry name" value="MFS_MdtH"/>
    <property type="match status" value="1"/>
</dbReference>
<dbReference type="InterPro" id="IPR011701">
    <property type="entry name" value="MFS"/>
</dbReference>
<dbReference type="InterPro" id="IPR020846">
    <property type="entry name" value="MFS_dom"/>
</dbReference>
<dbReference type="InterPro" id="IPR036259">
    <property type="entry name" value="MFS_trans_sf"/>
</dbReference>
<dbReference type="InterPro" id="IPR050171">
    <property type="entry name" value="MFS_Transporters"/>
</dbReference>
<dbReference type="InterPro" id="IPR022855">
    <property type="entry name" value="Multidrug-R_MdtH"/>
</dbReference>
<dbReference type="NCBIfam" id="NF008650">
    <property type="entry name" value="PRK11646.1"/>
    <property type="match status" value="1"/>
</dbReference>
<dbReference type="PANTHER" id="PTHR23517:SF2">
    <property type="entry name" value="MULTIDRUG RESISTANCE PROTEIN MDTH"/>
    <property type="match status" value="1"/>
</dbReference>
<dbReference type="PANTHER" id="PTHR23517">
    <property type="entry name" value="RESISTANCE PROTEIN MDTM, PUTATIVE-RELATED-RELATED"/>
    <property type="match status" value="1"/>
</dbReference>
<dbReference type="Pfam" id="PF07690">
    <property type="entry name" value="MFS_1"/>
    <property type="match status" value="1"/>
</dbReference>
<dbReference type="SUPFAM" id="SSF103473">
    <property type="entry name" value="MFS general substrate transporter"/>
    <property type="match status" value="1"/>
</dbReference>
<dbReference type="PROSITE" id="PS50850">
    <property type="entry name" value="MFS"/>
    <property type="match status" value="1"/>
</dbReference>